<keyword id="KW-0010">Activator</keyword>
<keyword id="KW-0966">Cell projection</keyword>
<keyword id="KW-0217">Developmental protein</keyword>
<keyword id="KW-0238">DNA-binding</keyword>
<keyword id="KW-0479">Metal-binding</keyword>
<keyword id="KW-0539">Nucleus</keyword>
<keyword id="KW-1185">Reference proteome</keyword>
<keyword id="KW-0677">Repeat</keyword>
<keyword id="KW-0804">Transcription</keyword>
<keyword id="KW-0805">Transcription regulation</keyword>
<keyword id="KW-0862">Zinc</keyword>
<keyword id="KW-0863">Zinc-finger</keyword>
<dbReference type="EMBL" id="X57834">
    <property type="protein sequence ID" value="CAA40967.1"/>
    <property type="molecule type" value="Genomic_DNA"/>
</dbReference>
<dbReference type="EMBL" id="BX284604">
    <property type="protein sequence ID" value="CAJ30235.1"/>
    <property type="molecule type" value="Genomic_DNA"/>
</dbReference>
<dbReference type="PIR" id="A41267">
    <property type="entry name" value="A41267"/>
</dbReference>
<dbReference type="PIR" id="T26296">
    <property type="entry name" value="T26296"/>
</dbReference>
<dbReference type="RefSeq" id="NP_001033436.1">
    <property type="nucleotide sequence ID" value="NM_001038347.3"/>
</dbReference>
<dbReference type="SMR" id="P28515"/>
<dbReference type="BioGRID" id="42899">
    <property type="interactions" value="24"/>
</dbReference>
<dbReference type="FunCoup" id="P28515">
    <property type="interactions" value="188"/>
</dbReference>
<dbReference type="IntAct" id="P28515">
    <property type="interactions" value="1"/>
</dbReference>
<dbReference type="STRING" id="6239.W09C2.1a.1"/>
<dbReference type="PaxDb" id="6239-W09C2.1a"/>
<dbReference type="EnsemblMetazoa" id="W09C2.1b.1">
    <property type="protein sequence ID" value="W09C2.1b.1"/>
    <property type="gene ID" value="WBGene00001249"/>
</dbReference>
<dbReference type="GeneID" id="177794"/>
<dbReference type="KEGG" id="cel:CELE_W09C2.1"/>
<dbReference type="UCSC" id="W09C2.1a">
    <property type="organism name" value="c. elegans"/>
</dbReference>
<dbReference type="AGR" id="WB:WBGene00001249"/>
<dbReference type="CTD" id="177794"/>
<dbReference type="WormBase" id="W09C2.1b">
    <property type="protein sequence ID" value="CE03799"/>
    <property type="gene ID" value="WBGene00001249"/>
    <property type="gene designation" value="elt-1"/>
</dbReference>
<dbReference type="eggNOG" id="KOG1601">
    <property type="taxonomic scope" value="Eukaryota"/>
</dbReference>
<dbReference type="HOGENOM" id="CLU_662645_0_0_1"/>
<dbReference type="InParanoid" id="P28515"/>
<dbReference type="OrthoDB" id="515401at2759"/>
<dbReference type="Reactome" id="R-CEL-5683826">
    <property type="pathway name" value="Surfactant metabolism"/>
</dbReference>
<dbReference type="Reactome" id="R-CEL-8936459">
    <property type="pathway name" value="RUNX1 regulates genes involved in megakaryocyte differentiation and platelet function"/>
</dbReference>
<dbReference type="PRO" id="PR:P28515"/>
<dbReference type="Proteomes" id="UP000001940">
    <property type="component" value="Chromosome IV"/>
</dbReference>
<dbReference type="Bgee" id="WBGene00001249">
    <property type="expression patterns" value="Expressed in embryo and 24 other cell types or tissues"/>
</dbReference>
<dbReference type="ExpressionAtlas" id="P28515">
    <property type="expression patterns" value="baseline and differential"/>
</dbReference>
<dbReference type="GO" id="GO:0030424">
    <property type="term" value="C:axon"/>
    <property type="evidence" value="ECO:0007669"/>
    <property type="project" value="UniProtKB-SubCell"/>
</dbReference>
<dbReference type="GO" id="GO:0005634">
    <property type="term" value="C:nucleus"/>
    <property type="evidence" value="ECO:0000314"/>
    <property type="project" value="WormBase"/>
</dbReference>
<dbReference type="GO" id="GO:0043204">
    <property type="term" value="C:perikaryon"/>
    <property type="evidence" value="ECO:0007669"/>
    <property type="project" value="UniProtKB-SubCell"/>
</dbReference>
<dbReference type="GO" id="GO:0000981">
    <property type="term" value="F:DNA-binding transcription factor activity, RNA polymerase II-specific"/>
    <property type="evidence" value="ECO:0000314"/>
    <property type="project" value="WormBase"/>
</dbReference>
<dbReference type="GO" id="GO:0000978">
    <property type="term" value="F:RNA polymerase II cis-regulatory region sequence-specific DNA binding"/>
    <property type="evidence" value="ECO:0000318"/>
    <property type="project" value="GO_Central"/>
</dbReference>
<dbReference type="GO" id="GO:0001162">
    <property type="term" value="F:RNA polymerase II intronic transcription regulatory region sequence-specific DNA binding"/>
    <property type="evidence" value="ECO:0000314"/>
    <property type="project" value="WormBase"/>
</dbReference>
<dbReference type="GO" id="GO:0008270">
    <property type="term" value="F:zinc ion binding"/>
    <property type="evidence" value="ECO:0007669"/>
    <property type="project" value="UniProtKB-KW"/>
</dbReference>
<dbReference type="GO" id="GO:0045165">
    <property type="term" value="P:cell fate commitment"/>
    <property type="evidence" value="ECO:0000318"/>
    <property type="project" value="GO_Central"/>
</dbReference>
<dbReference type="GO" id="GO:0009957">
    <property type="term" value="P:epidermal cell fate specification"/>
    <property type="evidence" value="ECO:0000315"/>
    <property type="project" value="WormBase"/>
</dbReference>
<dbReference type="GO" id="GO:0000122">
    <property type="term" value="P:negative regulation of transcription by RNA polymerase II"/>
    <property type="evidence" value="ECO:0000315"/>
    <property type="project" value="WormBase"/>
</dbReference>
<dbReference type="GO" id="GO:0045944">
    <property type="term" value="P:positive regulation of transcription by RNA polymerase II"/>
    <property type="evidence" value="ECO:0000314"/>
    <property type="project" value="WormBase"/>
</dbReference>
<dbReference type="GO" id="GO:0007286">
    <property type="term" value="P:spermatid development"/>
    <property type="evidence" value="ECO:0000315"/>
    <property type="project" value="WormBase"/>
</dbReference>
<dbReference type="GO" id="GO:0019827">
    <property type="term" value="P:stem cell population maintenance"/>
    <property type="evidence" value="ECO:0000315"/>
    <property type="project" value="WormBase"/>
</dbReference>
<dbReference type="CDD" id="cd00202">
    <property type="entry name" value="ZnF_GATA"/>
    <property type="match status" value="2"/>
</dbReference>
<dbReference type="FunFam" id="3.30.50.10:FF:000054">
    <property type="entry name" value="Transcription factor elt-1"/>
    <property type="match status" value="1"/>
</dbReference>
<dbReference type="FunFam" id="3.30.50.10:FF:000032">
    <property type="entry name" value="Transcription factor GATA-3"/>
    <property type="match status" value="1"/>
</dbReference>
<dbReference type="Gene3D" id="3.30.50.10">
    <property type="entry name" value="Erythroid Transcription Factor GATA-1, subunit A"/>
    <property type="match status" value="2"/>
</dbReference>
<dbReference type="InterPro" id="IPR039355">
    <property type="entry name" value="Transcription_factor_GATA"/>
</dbReference>
<dbReference type="InterPro" id="IPR000679">
    <property type="entry name" value="Znf_GATA"/>
</dbReference>
<dbReference type="InterPro" id="IPR013088">
    <property type="entry name" value="Znf_NHR/GATA"/>
</dbReference>
<dbReference type="PANTHER" id="PTHR10071:SF328">
    <property type="entry name" value="TRANSCRIPTION FACTOR ELT-1-RELATED"/>
    <property type="match status" value="1"/>
</dbReference>
<dbReference type="PANTHER" id="PTHR10071">
    <property type="entry name" value="TRANSCRIPTION FACTOR GATA FAMILY MEMBER"/>
    <property type="match status" value="1"/>
</dbReference>
<dbReference type="Pfam" id="PF00320">
    <property type="entry name" value="GATA"/>
    <property type="match status" value="2"/>
</dbReference>
<dbReference type="PRINTS" id="PR00619">
    <property type="entry name" value="GATAZNFINGER"/>
</dbReference>
<dbReference type="SMART" id="SM00401">
    <property type="entry name" value="ZnF_GATA"/>
    <property type="match status" value="2"/>
</dbReference>
<dbReference type="SUPFAM" id="SSF57716">
    <property type="entry name" value="Glucocorticoid receptor-like (DNA-binding domain)"/>
    <property type="match status" value="2"/>
</dbReference>
<dbReference type="PROSITE" id="PS00344">
    <property type="entry name" value="GATA_ZN_FINGER_1"/>
    <property type="match status" value="2"/>
</dbReference>
<dbReference type="PROSITE" id="PS50114">
    <property type="entry name" value="GATA_ZN_FINGER_2"/>
    <property type="match status" value="2"/>
</dbReference>
<comment type="function">
    <text evidence="3 4 5 6 7 8 9">Transcriptional activator that binds to the consensus sequence 5'-[AT]GATA[AG]-3' and variations thereof (PubMed:19591818, PubMed:21829390). During embryonic development, required for specification of cell fate of major hypodermal (epidermal) cells at the blastomere stage (PubMed:11259601, PubMed:16303852, PubMed:9224715). The requirement is true for all four lineages derived from ABarp, ABpra and C blastomeres (PubMed:9224715). Required for seam cell maintenance in late embryogenesis, for proper formation of dauer larvae and locomotion (PubMed:16303852). Regulates expression of bro-1, a regulator of seam cell proliferation, via a GATA-like binding motif (PubMed:21829390). Probably represses expression of eff-1 to prevent fusion of seam cells with the hypodermal syncytium (PubMed:21829390). Involved in regulating expression of elt-3, a probable downstream target in hypodermal development pathways, in dorsal and ventral hypodermal cells (PubMed:11259601, PubMed:16303852). During postembryonic development, has a role in sperm development (PubMed:19591818, PubMed:29702639). Specifically, binds the bipartite consensus sequence 5'-AGATCTx(8)GATAA-3' found in genes with sperm-specific expression (PubMed:19591818). Furthermore, regulates timing of developmental steps, possibly in parallel with daf-12, by controlling the expression of the let-7 family of miRNAs which in turn determines the transcription of heterochronic genes such as lin-41 (PubMed:25816370).</text>
</comment>
<comment type="subcellular location">
    <subcellularLocation>
        <location evidence="9">Nucleus</location>
    </subcellularLocation>
    <subcellularLocation>
        <location evidence="4">Perikaryon</location>
    </subcellularLocation>
    <subcellularLocation>
        <location evidence="4">Cell projection</location>
        <location evidence="4">Axon</location>
    </subcellularLocation>
    <text evidence="5">Expressed in pachytene nuclei during the first stage of meiosis.</text>
</comment>
<comment type="tissue specificity">
    <text evidence="4">Expressed in ventral cord and retrovesicular ganglion neurons. Expressed in vulval muscles of hermaphrodites and lateral seam and tail seam cells of males. Expressed in spermatozoa within the spermatheca of hermaphrodites.</text>
</comment>
<comment type="developmental stage">
    <text evidence="4 5 9">Expressed from the 28 cell stage of embryogenesis in hypodermal and muscle precursor cells (at protein level) (PubMed:9224715). Expressed from the 20-30 cell stage of embryogenesis onwards (PubMed:16303852). At the beginning of the comma stage, expression decreases in the dorsal and ventral hypodermis, but remains high in the seam cells until the pretzel stage of embryogenesis (PubMed:16303852). Expressed in neuronal cells of the retrovesicular ganglion during the threefold stage of embryogenesis (PubMed:16303852). Expressed highly in seam cells and retrovesicular ganglion and ventral cord neuronal cells from the L1 stage of larval development to adult (PubMed:16303852). Expressed in the sperm-producing germ line in spermatogenesis during the L4 stage of larval development (PubMed:19591818).</text>
</comment>
<comment type="domain">
    <text evidence="5">Both zinc fingers are required for DNA binding in vitro.</text>
</comment>
<comment type="disruption phenotype">
    <text evidence="4 5 6 7 9">Mainly embryonic lethal (PubMed:9224715). Mutants have defective body morphogenesis (PubMed:9224715). Embryos have few or no hypodermal cells, but more neuronal and muscle cells due to defective cell divisions and cell fate specification of ABarp- and ABpla-derived and C blastomere hypodermal precursor cells of the blastomere (PubMed:9224715). Defective alae formation and bursting vulva phenotype at the L4 stage of larval development (PubMed:25816370). RNAi-mediated knockdown results in a reduced brood size, complete or half-sterility and male tail defects (PubMed:19591818). Sterility may be due to sperm infertility and sperm morphological and mobility defects (PubMed:19591818). RNAi-mediated knockdown results in flaccidity, locomotion defects, herniating gonad and gross cuticle abnormalities which may be attributed to seam cell loss, and abnormal tail morphology and reduced tail seam cells in males (PubMed:16303852). Ninety percent of embryos produced by animals fed RNAi for more than 10 hours arrest early in development (PubMed:16303852). Embryos laid 6-10 hours after RNAi administration develop to the L1 stage of larval development, but display a lumpy dumpy phenotype with reduced elt-3 expression in dorsal and ventral hypodermal cells and greatly reduced seam cells with disorganised alignment and abnormal fusion of present seam cells (PubMed:16303852). RNAi-mediated knockdown at the L1, L2 or L3 larval stages results in a general loss of structural integrity 2-4 hours following the L4 larval stage to adult molt transition (PubMed:16303852). RNAi-mediated knockdown in temperature sensitive mutants leads to abnormal dauer formation with the majority of larvae arresting and appearing dauer-like following 30-35 hours after RNAi feeding (PubMed:16303852). Surviving larvae are wider in diameter than wild-type, have reduced motility, no pharyngeal pumping, granular appearance of the hypodermal and gut cytoplasm and dauer-like gonad morphology (PubMed:16303852). 40 and 60 hours post RNAi feeding, animals demonstrate seam cell defects that manifest as cuticle abnormalities (PubMed:16303852). RNAi-mediated knockdown results in fewer seam cells and seam cell defects including cell division, proliferation and fusion abnormalities and cell fate switching (PubMed:21829390).</text>
</comment>
<organism>
    <name type="scientific">Caenorhabditis elegans</name>
    <dbReference type="NCBI Taxonomy" id="6239"/>
    <lineage>
        <taxon>Eukaryota</taxon>
        <taxon>Metazoa</taxon>
        <taxon>Ecdysozoa</taxon>
        <taxon>Nematoda</taxon>
        <taxon>Chromadorea</taxon>
        <taxon>Rhabditida</taxon>
        <taxon>Rhabditina</taxon>
        <taxon>Rhabditomorpha</taxon>
        <taxon>Rhabditoidea</taxon>
        <taxon>Rhabditidae</taxon>
        <taxon>Peloderinae</taxon>
        <taxon>Caenorhabditis</taxon>
    </lineage>
</organism>
<gene>
    <name evidence="11" type="primary">elt-1</name>
    <name evidence="11" type="ORF">W09C2.1</name>
</gene>
<proteinExistence type="evidence at protein level"/>
<name>ELT1_CAEEL</name>
<evidence type="ECO:0000255" key="1">
    <source>
        <dbReference type="PROSITE-ProRule" id="PRU00094"/>
    </source>
</evidence>
<evidence type="ECO:0000256" key="2">
    <source>
        <dbReference type="SAM" id="MobiDB-lite"/>
    </source>
</evidence>
<evidence type="ECO:0000269" key="3">
    <source>
    </source>
</evidence>
<evidence type="ECO:0000269" key="4">
    <source>
    </source>
</evidence>
<evidence type="ECO:0000269" key="5">
    <source>
    </source>
</evidence>
<evidence type="ECO:0000269" key="6">
    <source>
    </source>
</evidence>
<evidence type="ECO:0000269" key="7">
    <source>
    </source>
</evidence>
<evidence type="ECO:0000269" key="8">
    <source>
    </source>
</evidence>
<evidence type="ECO:0000269" key="9">
    <source>
    </source>
</evidence>
<evidence type="ECO:0000305" key="10"/>
<evidence type="ECO:0000312" key="11">
    <source>
        <dbReference type="WormBase" id="W09C2.1b"/>
    </source>
</evidence>
<accession>P28515</accession>
<accession>Q3S1J7</accession>
<feature type="chain" id="PRO_0000083471" description="Transcription factor elt-1">
    <location>
        <begin position="1"/>
        <end position="416"/>
    </location>
</feature>
<feature type="zinc finger region" description="GATA-type 1" evidence="1">
    <location>
        <begin position="217"/>
        <end position="241"/>
    </location>
</feature>
<feature type="zinc finger region" description="GATA-type 2" evidence="1">
    <location>
        <begin position="272"/>
        <end position="296"/>
    </location>
</feature>
<feature type="region of interest" description="Disordered" evidence="2">
    <location>
        <begin position="156"/>
        <end position="211"/>
    </location>
</feature>
<feature type="region of interest" description="Disordered" evidence="2">
    <location>
        <begin position="319"/>
        <end position="351"/>
    </location>
</feature>
<feature type="compositionally biased region" description="Low complexity" evidence="2">
    <location>
        <begin position="166"/>
        <end position="190"/>
    </location>
</feature>
<feature type="compositionally biased region" description="Polar residues" evidence="2">
    <location>
        <begin position="191"/>
        <end position="211"/>
    </location>
</feature>
<feature type="compositionally biased region" description="Basic residues" evidence="2">
    <location>
        <begin position="319"/>
        <end position="332"/>
    </location>
</feature>
<feature type="compositionally biased region" description="Low complexity" evidence="2">
    <location>
        <begin position="336"/>
        <end position="351"/>
    </location>
</feature>
<feature type="mutagenesis site" description="In ku491; 50% reduction in fertility as compared to wild-type. Reduces function during postembryonic development. Defective alae formation." evidence="7 8">
    <original>P</original>
    <variation>S</variation>
    <location>
        <position position="226"/>
    </location>
</feature>
<sequence length="416" mass="44823">MDYEGKPVEFTLGTSSGGASLAPTSSTTAASIAPFSYNTSATNYYNTTPSSYPMFLNYQYAGGTTVTTDMDAFSGMDMSMNNGVFGTQNNPSYFYPTTQLNTYGYDTLAAATTASGITVNNNQLNVNIVQGNGTIVPQPITQNIISTVSNVQSSVPINNSQPLTPTGLAGCSTSSGSSSASSSSANSTSTPKNTISKANRSSGGANNSQFSTEDRECVNCGVHNTPLWRRDGSGNYLCNACGLYFKMNHHARPLVKPKKRQQNAQKRTGIECVNCRTNTTTLWRRNGEGHPVCNACGLYFKLHKVERPITMKKDGIQTRNRKLSAKGSRRMKKENGGTPTSMGMPTTSSSISSGIELDQSGVWGMKNTQPMLMTPTAYAFPASNFYFNSIEDQLEYKTCPPMMVDFGGQMKNLNLN</sequence>
<protein>
    <recommendedName>
        <fullName evidence="10">Transcription factor elt-1</fullName>
    </recommendedName>
</protein>
<reference key="1">
    <citation type="journal article" date="1991" name="Mol. Cell. Biol.">
        <title>elt-1, an embryonically expressed Caenorhabditis elegans gene homologous to the GATA transcription factor family.</title>
        <authorList>
            <person name="Spieth J."/>
            <person name="Shim Y.H."/>
            <person name="Lea K."/>
            <person name="Conrad R."/>
            <person name="Blumenthal T."/>
        </authorList>
    </citation>
    <scope>NUCLEOTIDE SEQUENCE [GENOMIC DNA / MRNA]</scope>
</reference>
<reference key="2">
    <citation type="journal article" date="1998" name="Science">
        <title>Genome sequence of the nematode C. elegans: a platform for investigating biology.</title>
        <authorList>
            <consortium name="The C. elegans sequencing consortium"/>
        </authorList>
    </citation>
    <scope>NUCLEOTIDE SEQUENCE [LARGE SCALE GENOMIC DNA]</scope>
    <source>
        <strain>Bristol N2</strain>
    </source>
</reference>
<reference key="3">
    <citation type="journal article" date="1997" name="Genes Dev.">
        <title>ELT-1, a GATA-like transcription factor, is required for epidermal cell fates in Caenorhabditis elegans embryos.</title>
        <authorList>
            <person name="Page B.D."/>
            <person name="Zhang W."/>
            <person name="Steward K."/>
            <person name="Blumenthal T."/>
            <person name="Priess J.R."/>
        </authorList>
    </citation>
    <scope>FUNCTION</scope>
    <scope>SUBCELLULAR LOCATION</scope>
    <scope>DEVELOPMENTAL STAGE</scope>
    <scope>DISRUPTION PHENOTYPE</scope>
</reference>
<reference key="4">
    <citation type="journal article" date="2001" name="Mol. Cell. Biol.">
        <title>Activation of hypodermal differentiation in the Caenorhabditis elegans embryo by GATA transcription factors ELT-1 and ELT-3.</title>
        <authorList>
            <person name="Gilleard J.S."/>
            <person name="McGhee J.D."/>
        </authorList>
    </citation>
    <scope>FUNCTION</scope>
</reference>
<reference key="5">
    <citation type="journal article" date="2005" name="J. Cell Sci.">
        <title>The Caenorhabditis elegans GATA factor elt-1 is essential for differentiation and maintenance of hypodermal seam cells and for normal locomotion.</title>
        <authorList>
            <person name="Smith J.A."/>
            <person name="McGarr P."/>
            <person name="Gilleard J.S."/>
        </authorList>
    </citation>
    <scope>FUNCTION</scope>
    <scope>SUBCELLULAR LOCATION</scope>
    <scope>TISSUE SPECIFICITY</scope>
    <scope>DEVELOPMENTAL STAGE</scope>
    <scope>DISRUPTION PHENOTYPE</scope>
</reference>
<reference key="6">
    <citation type="journal article" date="2009" name="Dev. Biol.">
        <title>Regulation of sperm gene expression by the GATA factor ELT-1.</title>
        <authorList>
            <person name="del Castillo-Olivares A."/>
            <person name="Kulkarni M."/>
            <person name="Smith H.E."/>
        </authorList>
    </citation>
    <scope>FUNCTION</scope>
    <scope>SUBCELLULAR LOCATION</scope>
    <scope>DEVELOPMENTAL STAGE</scope>
    <scope>DOMAIN</scope>
    <scope>DISRUPTION PHENOTYPE</scope>
</reference>
<reference key="7">
    <citation type="journal article" date="2011" name="PLoS Genet.">
        <title>The Caenorhabditis elegans GATA factor ELT-1 works through the cell proliferation regulator BRO-1 and the Fusogen EFF-1 to maintain the seam stem-like fate.</title>
        <authorList>
            <person name="Brabin C."/>
            <person name="Appleford P.J."/>
            <person name="Woollard A."/>
        </authorList>
    </citation>
    <scope>FUNCTION</scope>
    <scope>DISRUPTION PHENOTYPE</scope>
</reference>
<reference key="8">
    <citation type="journal article" date="2015" name="PLoS Genet.">
        <title>The GATA factor elt-1 regulates C. elegans developmental timing by promoting expression of the let-7 family microRNAs.</title>
        <authorList>
            <person name="Cohen M.L."/>
            <person name="Kim S."/>
            <person name="Morita K."/>
            <person name="Kim S.H."/>
            <person name="Han M."/>
        </authorList>
    </citation>
    <scope>FUNCTION</scope>
    <scope>DISRUPTION PHENOTYPE</scope>
    <scope>MUTAGENESIS OF PRO-226</scope>
</reference>
<reference key="9">
    <citation type="journal article" date="2018" name="PLoS Genet.">
        <title>A Caenorhabditis elegans protein with a PRDM9-like SET domain localizes to chromatin-associated foci and promotes spermatocyte gene expression, sperm production and fertility.</title>
        <authorList>
            <person name="Engert C.G."/>
            <person name="Droste R."/>
            <person name="van Oudenaarden A."/>
            <person name="Horvitz H.R."/>
        </authorList>
    </citation>
    <scope>FUNCTION</scope>
    <scope>MUTAGENESIS OF PRO-226</scope>
</reference>